<reference key="1">
    <citation type="journal article" date="2000" name="Antimicrob. Agents Chemother.">
        <title>Identification of the novobiocin biosynthetic gene cluster of Streptomyces spheroides NCIB 11891.</title>
        <authorList>
            <person name="Steffensky M."/>
            <person name="Muhlenweg A."/>
            <person name="Wang Z.X."/>
            <person name="Li S.M."/>
            <person name="Heide L."/>
        </authorList>
    </citation>
    <scope>NUCLEOTIDE SEQUENCE [GENOMIC DNA]</scope>
    <source>
        <strain>ATCC 23965 / DSM 40292 / JCM 4252 / NBRC 12917 / NCIMB 11891 / NRRL 2449</strain>
    </source>
</reference>
<reference key="2">
    <citation type="journal article" date="2001" name="Chem. Biol.">
        <title>Coumarin formation in novobiocin biosynthesis: beta-hydroxylation of the aminoacyl enzyme tyrosyl-S-NovH by a cytochrome P450 NovI.</title>
        <authorList>
            <person name="Chen H."/>
            <person name="Walsh C.T."/>
        </authorList>
    </citation>
    <scope>FUNCTION</scope>
    <scope>PATHWAY</scope>
    <scope>BIOPHYSICOCHEMICAL PROPERTIES</scope>
    <source>
        <strain>ATCC 23965 / DSM 40292 / JCM 4252 / NBRC 12917 / NCIMB 11891 / NRRL 2449</strain>
    </source>
</reference>
<sequence length="600" mass="63315">MFNTRANKASDQSPTIPTESATLAELWERTVRSRPSSPAIVTNGETLSYDEVNARANRLARLLLDEGAGPGRLVALALPRSSHLVISVLAVAKAGAVFLPLDVNHPRERLSYQLADARPALLCTVRSAAARLPDGIEMPRVLLDSPERTAVLDALPDTDLTDDERGGPLAATDLAYVIYTSGSTGRPKGVALTGAGLPALAAAKVAAMRVTGDSRVLQFASPGFDAYLTELLAAFTAGATLVVPGTDTLAGDPLRRALRDGRVSHAVLPPAAVATMSPDAVPDLRVLVVAGEACPAGLVERWAPGRLLINAYGPTECTVCATMTGPLTPTDEVTIGRPIPGVSVYILDAERRPAAPGEIGELYLSGAGLAQGYLNSPDLTAQMFVPNPFAADGERMYRTGDLASRRADGDILFHGRIDDQVELRGFRVELGEVESVLSQHPDVAQAVAALWTDPAEGPQLVTYVVPAPGTTPSAGELREHAGRFLPDFMVPSAFTTIDAVPLTPGGKTDRAGLPDPVKATQPAGLGPRTPAEKVLCDIFRDLFDLVEIDVRSNFFEMGGNSILAVDLIQRAQEAGLTLMPRTVIDHPTIEQLAAIATLEE</sequence>
<dbReference type="EC" id="6.-.-.-"/>
<dbReference type="EMBL" id="AF170880">
    <property type="protein sequence ID" value="AAF67501.2"/>
    <property type="molecule type" value="Genomic_DNA"/>
</dbReference>
<dbReference type="RefSeq" id="WP_218028043.1">
    <property type="nucleotide sequence ID" value="NZ_JBIVVP010000002.1"/>
</dbReference>
<dbReference type="SMR" id="Q9L9G0"/>
<dbReference type="KEGG" id="ag:AAF67501"/>
<dbReference type="BioCyc" id="MetaCyc:MONOMER-18084"/>
<dbReference type="UniPathway" id="UPA01035"/>
<dbReference type="GO" id="GO:0005737">
    <property type="term" value="C:cytoplasm"/>
    <property type="evidence" value="ECO:0007669"/>
    <property type="project" value="TreeGrafter"/>
</dbReference>
<dbReference type="GO" id="GO:0016874">
    <property type="term" value="F:ligase activity"/>
    <property type="evidence" value="ECO:0000314"/>
    <property type="project" value="UniProtKB"/>
</dbReference>
<dbReference type="GO" id="GO:0031177">
    <property type="term" value="F:phosphopantetheine binding"/>
    <property type="evidence" value="ECO:0007669"/>
    <property type="project" value="TreeGrafter"/>
</dbReference>
<dbReference type="GO" id="GO:0043041">
    <property type="term" value="P:amino acid activation for nonribosomal peptide biosynthetic process"/>
    <property type="evidence" value="ECO:0007669"/>
    <property type="project" value="TreeGrafter"/>
</dbReference>
<dbReference type="GO" id="GO:0043642">
    <property type="term" value="P:novobiocin biosynthetic process"/>
    <property type="evidence" value="ECO:0000314"/>
    <property type="project" value="UniProtKB"/>
</dbReference>
<dbReference type="CDD" id="cd17652">
    <property type="entry name" value="A_NRPS_CmdD_like"/>
    <property type="match status" value="1"/>
</dbReference>
<dbReference type="FunFam" id="3.40.50.12780:FF:000121">
    <property type="entry name" value="Acyl-CoA synthetase"/>
    <property type="match status" value="1"/>
</dbReference>
<dbReference type="FunFam" id="3.40.50.980:FF:000001">
    <property type="entry name" value="Non-ribosomal peptide synthetase"/>
    <property type="match status" value="1"/>
</dbReference>
<dbReference type="Gene3D" id="3.30.300.30">
    <property type="match status" value="1"/>
</dbReference>
<dbReference type="Gene3D" id="1.10.1200.10">
    <property type="entry name" value="ACP-like"/>
    <property type="match status" value="1"/>
</dbReference>
<dbReference type="Gene3D" id="3.40.50.12780">
    <property type="entry name" value="N-terminal domain of ligase-like"/>
    <property type="match status" value="1"/>
</dbReference>
<dbReference type="InterPro" id="IPR010071">
    <property type="entry name" value="AA_adenyl_dom"/>
</dbReference>
<dbReference type="InterPro" id="IPR036736">
    <property type="entry name" value="ACP-like_sf"/>
</dbReference>
<dbReference type="InterPro" id="IPR025110">
    <property type="entry name" value="AMP-bd_C"/>
</dbReference>
<dbReference type="InterPro" id="IPR045851">
    <property type="entry name" value="AMP-bd_C_sf"/>
</dbReference>
<dbReference type="InterPro" id="IPR020459">
    <property type="entry name" value="AMP-binding"/>
</dbReference>
<dbReference type="InterPro" id="IPR020845">
    <property type="entry name" value="AMP-binding_CS"/>
</dbReference>
<dbReference type="InterPro" id="IPR000873">
    <property type="entry name" value="AMP-dep_synth/lig_dom"/>
</dbReference>
<dbReference type="InterPro" id="IPR042099">
    <property type="entry name" value="ANL_N_sf"/>
</dbReference>
<dbReference type="InterPro" id="IPR009081">
    <property type="entry name" value="PP-bd_ACP"/>
</dbReference>
<dbReference type="InterPro" id="IPR006162">
    <property type="entry name" value="Ppantetheine_attach_site"/>
</dbReference>
<dbReference type="NCBIfam" id="TIGR01733">
    <property type="entry name" value="AA-adenyl-dom"/>
    <property type="match status" value="1"/>
</dbReference>
<dbReference type="PANTHER" id="PTHR45527:SF1">
    <property type="entry name" value="FATTY ACID SYNTHASE"/>
    <property type="match status" value="1"/>
</dbReference>
<dbReference type="PANTHER" id="PTHR45527">
    <property type="entry name" value="NONRIBOSOMAL PEPTIDE SYNTHETASE"/>
    <property type="match status" value="1"/>
</dbReference>
<dbReference type="Pfam" id="PF00501">
    <property type="entry name" value="AMP-binding"/>
    <property type="match status" value="1"/>
</dbReference>
<dbReference type="Pfam" id="PF13193">
    <property type="entry name" value="AMP-binding_C"/>
    <property type="match status" value="1"/>
</dbReference>
<dbReference type="Pfam" id="PF00550">
    <property type="entry name" value="PP-binding"/>
    <property type="match status" value="1"/>
</dbReference>
<dbReference type="PRINTS" id="PR00154">
    <property type="entry name" value="AMPBINDING"/>
</dbReference>
<dbReference type="SUPFAM" id="SSF56801">
    <property type="entry name" value="Acetyl-CoA synthetase-like"/>
    <property type="match status" value="1"/>
</dbReference>
<dbReference type="SUPFAM" id="SSF47336">
    <property type="entry name" value="ACP-like"/>
    <property type="match status" value="1"/>
</dbReference>
<dbReference type="PROSITE" id="PS00455">
    <property type="entry name" value="AMP_BINDING"/>
    <property type="match status" value="1"/>
</dbReference>
<dbReference type="PROSITE" id="PS50075">
    <property type="entry name" value="CARRIER"/>
    <property type="match status" value="1"/>
</dbReference>
<dbReference type="PROSITE" id="PS00012">
    <property type="entry name" value="PHOSPHOPANTETHEINE"/>
    <property type="match status" value="1"/>
</dbReference>
<comment type="function">
    <text evidence="3">Together with NovI, involved in the formation of a beta-OH-Tyr intermediate in the novobiocin biosynthesis pathway, an aminocoumarin family antibiotic that targets bacterial DNA gyrases. The ATP-dependent AMP-binding region activates L-Tyr as L-tyrosyl-AMP and then transfers the L-tyrosyl group to the acyl carrier domain through thioester formation to form a tyrosyl-S intermediate that is covalently tethered to NovH (L-Tyr-S-NovH).</text>
</comment>
<comment type="biophysicochemical properties">
    <kinetics>
        <KM evidence="3">1.39 mM for L-Tyr</KM>
        <KM evidence="3">0.84 mM for p-Br-DL-Phe</KM>
        <KM evidence="3">0.89 mM for L-Phe</KM>
        <KM evidence="3">2.17 mM for 3-Cl-L-Tyr</KM>
        <KM evidence="3">6.13 mM for 3-Me-L-Tyr</KM>
        <text>kcat is 15 min(-1) with L-Tyr as substrate. kcat is 0.44 min(-1) with p-Br-DL-Phe as substrate. kcat is 0.13 min(-1) with L-Phe as substrate. kcat is 0.23 min(-1) with 3-Cl-L-Tyr as substrate. kcat is 0.0083 min(-1) with 3-Me-L-Tyr as substrate.</text>
    </kinetics>
</comment>
<comment type="pathway">
    <text evidence="3">Antibiotic biosynthesis; novobiocin biosynthesis.</text>
</comment>
<comment type="similarity">
    <text evidence="4">Belongs to the ATP-dependent AMP-binding enzyme family.</text>
</comment>
<keyword id="KW-0045">Antibiotic biosynthesis</keyword>
<keyword id="KW-0436">Ligase</keyword>
<keyword id="KW-0596">Phosphopantetheine</keyword>
<keyword id="KW-0597">Phosphoprotein</keyword>
<proteinExistence type="evidence at protein level"/>
<organism>
    <name type="scientific">Streptomyces niveus</name>
    <name type="common">Streptomyces spheroides</name>
    <dbReference type="NCBI Taxonomy" id="193462"/>
    <lineage>
        <taxon>Bacteria</taxon>
        <taxon>Bacillati</taxon>
        <taxon>Actinomycetota</taxon>
        <taxon>Actinomycetes</taxon>
        <taxon>Kitasatosporales</taxon>
        <taxon>Streptomycetaceae</taxon>
        <taxon>Streptomyces</taxon>
    </lineage>
</organism>
<feature type="chain" id="PRO_0000423997" description="Novobiocin biosynthesis protein H">
    <location>
        <begin position="1"/>
        <end position="600"/>
    </location>
</feature>
<feature type="domain" description="Carrier" evidence="1">
    <location>
        <begin position="526"/>
        <end position="600"/>
    </location>
</feature>
<feature type="region of interest" description="Disordered" evidence="2">
    <location>
        <begin position="505"/>
        <end position="526"/>
    </location>
</feature>
<feature type="modified residue" description="O-(pantetheine 4'-phosphoryl)serine" evidence="1">
    <location>
        <position position="561"/>
    </location>
</feature>
<protein>
    <recommendedName>
        <fullName>Novobiocin biosynthesis protein H</fullName>
        <ecNumber>6.-.-.-</ecNumber>
    </recommendedName>
</protein>
<evidence type="ECO:0000255" key="1">
    <source>
        <dbReference type="PROSITE-ProRule" id="PRU00258"/>
    </source>
</evidence>
<evidence type="ECO:0000256" key="2">
    <source>
        <dbReference type="SAM" id="MobiDB-lite"/>
    </source>
</evidence>
<evidence type="ECO:0000269" key="3">
    <source>
    </source>
</evidence>
<evidence type="ECO:0000305" key="4"/>
<gene>
    <name type="primary">novH</name>
</gene>
<accession>Q9L9G0</accession>
<name>NOVH_STRNV</name>